<accession>B9EJ80</accession>
<accession>Q3UMB1</accession>
<keyword id="KW-0175">Coiled coil</keyword>
<keyword id="KW-0256">Endoplasmic reticulum</keyword>
<keyword id="KW-0445">Lipid transport</keyword>
<keyword id="KW-0446">Lipid-binding</keyword>
<keyword id="KW-0472">Membrane</keyword>
<keyword id="KW-0479">Metal-binding</keyword>
<keyword id="KW-0597">Phosphoprotein</keyword>
<keyword id="KW-1185">Reference proteome</keyword>
<keyword id="KW-0812">Transmembrane</keyword>
<keyword id="KW-1133">Transmembrane helix</keyword>
<keyword id="KW-0813">Transport</keyword>
<keyword id="KW-0862">Zinc</keyword>
<keyword id="KW-0863">Zinc-finger</keyword>
<feature type="chain" id="PRO_0000442772" description="PDZ domain-containing protein 8">
    <location>
        <begin position="1"/>
        <end position="1147"/>
    </location>
</feature>
<feature type="transmembrane region" description="Helical" evidence="3">
    <location>
        <begin position="2"/>
        <end position="24"/>
    </location>
</feature>
<feature type="domain" description="SMP-LTD" evidence="6">
    <location>
        <begin position="87"/>
        <end position="293"/>
    </location>
</feature>
<feature type="domain" description="PDZ" evidence="4">
    <location>
        <begin position="365"/>
        <end position="448"/>
    </location>
</feature>
<feature type="zinc finger region" description="Phorbol-ester/DAG-type" evidence="5">
    <location>
        <begin position="833"/>
        <end position="884"/>
    </location>
</feature>
<feature type="region of interest" description="Disordered" evidence="7">
    <location>
        <begin position="504"/>
        <end position="673"/>
    </location>
</feature>
<feature type="region of interest" description="Disordered" evidence="7">
    <location>
        <begin position="948"/>
        <end position="990"/>
    </location>
</feature>
<feature type="region of interest" description="Disordered" evidence="7">
    <location>
        <begin position="1126"/>
        <end position="1147"/>
    </location>
</feature>
<feature type="coiled-coil region" evidence="3">
    <location>
        <begin position="1021"/>
        <end position="1056"/>
    </location>
</feature>
<feature type="compositionally biased region" description="Polar residues" evidence="7">
    <location>
        <begin position="510"/>
        <end position="524"/>
    </location>
</feature>
<feature type="compositionally biased region" description="Polar residues" evidence="7">
    <location>
        <begin position="557"/>
        <end position="576"/>
    </location>
</feature>
<feature type="compositionally biased region" description="Pro residues" evidence="7">
    <location>
        <begin position="580"/>
        <end position="596"/>
    </location>
</feature>
<feature type="compositionally biased region" description="Polar residues" evidence="7">
    <location>
        <begin position="978"/>
        <end position="987"/>
    </location>
</feature>
<feature type="compositionally biased region" description="Polar residues" evidence="7">
    <location>
        <begin position="1126"/>
        <end position="1137"/>
    </location>
</feature>
<feature type="modified residue" description="Phosphoserine" evidence="2">
    <location>
        <position position="490"/>
    </location>
</feature>
<feature type="modified residue" description="Phosphoserine" evidence="2">
    <location>
        <position position="515"/>
    </location>
</feature>
<feature type="modified residue" description="Phosphoserine" evidence="13 14">
    <location>
        <position position="532"/>
    </location>
</feature>
<feature type="modified residue" description="Phosphoserine" evidence="2">
    <location>
        <position position="960"/>
    </location>
</feature>
<feature type="modified residue" description="Phosphoserine" evidence="14">
    <location>
        <position position="973"/>
    </location>
</feature>
<feature type="sequence conflict" description="In Ref. 1; BAE26187." evidence="10" ref="1">
    <original>A</original>
    <variation>V</variation>
    <location>
        <position position="660"/>
    </location>
</feature>
<reference key="1">
    <citation type="journal article" date="2005" name="Science">
        <title>The transcriptional landscape of the mammalian genome.</title>
        <authorList>
            <person name="Carninci P."/>
            <person name="Kasukawa T."/>
            <person name="Katayama S."/>
            <person name="Gough J."/>
            <person name="Frith M.C."/>
            <person name="Maeda N."/>
            <person name="Oyama R."/>
            <person name="Ravasi T."/>
            <person name="Lenhard B."/>
            <person name="Wells C."/>
            <person name="Kodzius R."/>
            <person name="Shimokawa K."/>
            <person name="Bajic V.B."/>
            <person name="Brenner S.E."/>
            <person name="Batalov S."/>
            <person name="Forrest A.R."/>
            <person name="Zavolan M."/>
            <person name="Davis M.J."/>
            <person name="Wilming L.G."/>
            <person name="Aidinis V."/>
            <person name="Allen J.E."/>
            <person name="Ambesi-Impiombato A."/>
            <person name="Apweiler R."/>
            <person name="Aturaliya R.N."/>
            <person name="Bailey T.L."/>
            <person name="Bansal M."/>
            <person name="Baxter L."/>
            <person name="Beisel K.W."/>
            <person name="Bersano T."/>
            <person name="Bono H."/>
            <person name="Chalk A.M."/>
            <person name="Chiu K.P."/>
            <person name="Choudhary V."/>
            <person name="Christoffels A."/>
            <person name="Clutterbuck D.R."/>
            <person name="Crowe M.L."/>
            <person name="Dalla E."/>
            <person name="Dalrymple B.P."/>
            <person name="de Bono B."/>
            <person name="Della Gatta G."/>
            <person name="di Bernardo D."/>
            <person name="Down T."/>
            <person name="Engstrom P."/>
            <person name="Fagiolini M."/>
            <person name="Faulkner G."/>
            <person name="Fletcher C.F."/>
            <person name="Fukushima T."/>
            <person name="Furuno M."/>
            <person name="Futaki S."/>
            <person name="Gariboldi M."/>
            <person name="Georgii-Hemming P."/>
            <person name="Gingeras T.R."/>
            <person name="Gojobori T."/>
            <person name="Green R.E."/>
            <person name="Gustincich S."/>
            <person name="Harbers M."/>
            <person name="Hayashi Y."/>
            <person name="Hensch T.K."/>
            <person name="Hirokawa N."/>
            <person name="Hill D."/>
            <person name="Huminiecki L."/>
            <person name="Iacono M."/>
            <person name="Ikeo K."/>
            <person name="Iwama A."/>
            <person name="Ishikawa T."/>
            <person name="Jakt M."/>
            <person name="Kanapin A."/>
            <person name="Katoh M."/>
            <person name="Kawasawa Y."/>
            <person name="Kelso J."/>
            <person name="Kitamura H."/>
            <person name="Kitano H."/>
            <person name="Kollias G."/>
            <person name="Krishnan S.P."/>
            <person name="Kruger A."/>
            <person name="Kummerfeld S.K."/>
            <person name="Kurochkin I.V."/>
            <person name="Lareau L.F."/>
            <person name="Lazarevic D."/>
            <person name="Lipovich L."/>
            <person name="Liu J."/>
            <person name="Liuni S."/>
            <person name="McWilliam S."/>
            <person name="Madan Babu M."/>
            <person name="Madera M."/>
            <person name="Marchionni L."/>
            <person name="Matsuda H."/>
            <person name="Matsuzawa S."/>
            <person name="Miki H."/>
            <person name="Mignone F."/>
            <person name="Miyake S."/>
            <person name="Morris K."/>
            <person name="Mottagui-Tabar S."/>
            <person name="Mulder N."/>
            <person name="Nakano N."/>
            <person name="Nakauchi H."/>
            <person name="Ng P."/>
            <person name="Nilsson R."/>
            <person name="Nishiguchi S."/>
            <person name="Nishikawa S."/>
            <person name="Nori F."/>
            <person name="Ohara O."/>
            <person name="Okazaki Y."/>
            <person name="Orlando V."/>
            <person name="Pang K.C."/>
            <person name="Pavan W.J."/>
            <person name="Pavesi G."/>
            <person name="Pesole G."/>
            <person name="Petrovsky N."/>
            <person name="Piazza S."/>
            <person name="Reed J."/>
            <person name="Reid J.F."/>
            <person name="Ring B.Z."/>
            <person name="Ringwald M."/>
            <person name="Rost B."/>
            <person name="Ruan Y."/>
            <person name="Salzberg S.L."/>
            <person name="Sandelin A."/>
            <person name="Schneider C."/>
            <person name="Schoenbach C."/>
            <person name="Sekiguchi K."/>
            <person name="Semple C.A."/>
            <person name="Seno S."/>
            <person name="Sessa L."/>
            <person name="Sheng Y."/>
            <person name="Shibata Y."/>
            <person name="Shimada H."/>
            <person name="Shimada K."/>
            <person name="Silva D."/>
            <person name="Sinclair B."/>
            <person name="Sperling S."/>
            <person name="Stupka E."/>
            <person name="Sugiura K."/>
            <person name="Sultana R."/>
            <person name="Takenaka Y."/>
            <person name="Taki K."/>
            <person name="Tammoja K."/>
            <person name="Tan S.L."/>
            <person name="Tang S."/>
            <person name="Taylor M.S."/>
            <person name="Tegner J."/>
            <person name="Teichmann S.A."/>
            <person name="Ueda H.R."/>
            <person name="van Nimwegen E."/>
            <person name="Verardo R."/>
            <person name="Wei C.L."/>
            <person name="Yagi K."/>
            <person name="Yamanishi H."/>
            <person name="Zabarovsky E."/>
            <person name="Zhu S."/>
            <person name="Zimmer A."/>
            <person name="Hide W."/>
            <person name="Bult C."/>
            <person name="Grimmond S.M."/>
            <person name="Teasdale R.D."/>
            <person name="Liu E.T."/>
            <person name="Brusic V."/>
            <person name="Quackenbush J."/>
            <person name="Wahlestedt C."/>
            <person name="Mattick J.S."/>
            <person name="Hume D.A."/>
            <person name="Kai C."/>
            <person name="Sasaki D."/>
            <person name="Tomaru Y."/>
            <person name="Fukuda S."/>
            <person name="Kanamori-Katayama M."/>
            <person name="Suzuki M."/>
            <person name="Aoki J."/>
            <person name="Arakawa T."/>
            <person name="Iida J."/>
            <person name="Imamura K."/>
            <person name="Itoh M."/>
            <person name="Kato T."/>
            <person name="Kawaji H."/>
            <person name="Kawagashira N."/>
            <person name="Kawashima T."/>
            <person name="Kojima M."/>
            <person name="Kondo S."/>
            <person name="Konno H."/>
            <person name="Nakano K."/>
            <person name="Ninomiya N."/>
            <person name="Nishio T."/>
            <person name="Okada M."/>
            <person name="Plessy C."/>
            <person name="Shibata K."/>
            <person name="Shiraki T."/>
            <person name="Suzuki S."/>
            <person name="Tagami M."/>
            <person name="Waki K."/>
            <person name="Watahiki A."/>
            <person name="Okamura-Oho Y."/>
            <person name="Suzuki H."/>
            <person name="Kawai J."/>
            <person name="Hayashizaki Y."/>
        </authorList>
    </citation>
    <scope>NUCLEOTIDE SEQUENCE [LARGE SCALE MRNA]</scope>
    <source>
        <tissue evidence="11">Mammary gland</tissue>
    </source>
</reference>
<reference key="2">
    <citation type="journal article" date="2009" name="PLoS Biol.">
        <title>Lineage-specific biology revealed by a finished genome assembly of the mouse.</title>
        <authorList>
            <person name="Church D.M."/>
            <person name="Goodstadt L."/>
            <person name="Hillier L.W."/>
            <person name="Zody M.C."/>
            <person name="Goldstein S."/>
            <person name="She X."/>
            <person name="Bult C.J."/>
            <person name="Agarwala R."/>
            <person name="Cherry J.L."/>
            <person name="DiCuccio M."/>
            <person name="Hlavina W."/>
            <person name="Kapustin Y."/>
            <person name="Meric P."/>
            <person name="Maglott D."/>
            <person name="Birtle Z."/>
            <person name="Marques A.C."/>
            <person name="Graves T."/>
            <person name="Zhou S."/>
            <person name="Teague B."/>
            <person name="Potamousis K."/>
            <person name="Churas C."/>
            <person name="Place M."/>
            <person name="Herschleb J."/>
            <person name="Runnheim R."/>
            <person name="Forrest D."/>
            <person name="Amos-Landgraf J."/>
            <person name="Schwartz D.C."/>
            <person name="Cheng Z."/>
            <person name="Lindblad-Toh K."/>
            <person name="Eichler E.E."/>
            <person name="Ponting C.P."/>
        </authorList>
    </citation>
    <scope>NUCLEOTIDE SEQUENCE [LARGE SCALE GENOMIC DNA]</scope>
    <source>
        <strain>C57BL/6J</strain>
    </source>
</reference>
<reference key="3">
    <citation type="journal article" date="2004" name="Genome Res.">
        <title>The status, quality, and expansion of the NIH full-length cDNA project: the Mammalian Gene Collection (MGC).</title>
        <authorList>
            <consortium name="The MGC Project Team"/>
        </authorList>
    </citation>
    <scope>NUCLEOTIDE SEQUENCE [LARGE SCALE MRNA]</scope>
    <source>
        <tissue>Brain</tissue>
    </source>
</reference>
<reference key="4">
    <citation type="journal article" date="2007" name="Proc. Natl. Acad. Sci. U.S.A.">
        <title>Large-scale phosphorylation analysis of mouse liver.</title>
        <authorList>
            <person name="Villen J."/>
            <person name="Beausoleil S.A."/>
            <person name="Gerber S.A."/>
            <person name="Gygi S.P."/>
        </authorList>
    </citation>
    <scope>PHOSPHORYLATION [LARGE SCALE ANALYSIS] AT SER-532</scope>
    <scope>IDENTIFICATION BY MASS SPECTROMETRY [LARGE SCALE ANALYSIS]</scope>
    <source>
        <tissue>Liver</tissue>
    </source>
</reference>
<reference key="5">
    <citation type="journal article" date="2010" name="Cell">
        <title>A tissue-specific atlas of mouse protein phosphorylation and expression.</title>
        <authorList>
            <person name="Huttlin E.L."/>
            <person name="Jedrychowski M.P."/>
            <person name="Elias J.E."/>
            <person name="Goswami T."/>
            <person name="Rad R."/>
            <person name="Beausoleil S.A."/>
            <person name="Villen J."/>
            <person name="Haas W."/>
            <person name="Sowa M.E."/>
            <person name="Gygi S.P."/>
        </authorList>
    </citation>
    <scope>PHOSPHORYLATION [LARGE SCALE ANALYSIS] AT SER-532 AND SER-973</scope>
    <scope>IDENTIFICATION BY MASS SPECTROMETRY [LARGE SCALE ANALYSIS]</scope>
    <source>
        <tissue>Brain</tissue>
        <tissue>Kidney</tissue>
        <tissue>Lung</tissue>
        <tissue>Pancreas</tissue>
        <tissue>Spleen</tissue>
        <tissue>Testis</tissue>
    </source>
</reference>
<reference key="6">
    <citation type="journal article" date="2017" name="Science">
        <title>ER-mitochondria tethering by PDZD8 regulates Ca(2+) dynamics in mammalian neurons.</title>
        <authorList>
            <person name="Hirabayashi Y."/>
            <person name="Kwon S.K."/>
            <person name="Paek H."/>
            <person name="Pernice W.M."/>
            <person name="Paul M.A."/>
            <person name="Lee J."/>
            <person name="Erfani P."/>
            <person name="Raczkowski A."/>
            <person name="Petrey D.S."/>
            <person name="Pon L.A."/>
            <person name="Polleux F."/>
        </authorList>
    </citation>
    <scope>FUNCTION</scope>
    <scope>SUBCELLULAR LOCATION</scope>
</reference>
<reference key="7">
    <citation type="journal article" date="2022" name="Biol. Psychiatry">
        <title>PDZD8 disruption causes cognitive impairment in humans, mice, and fruit flies.</title>
        <authorList>
            <person name="Al-Amri A.H."/>
            <person name="Armstrong P."/>
            <person name="Amici M."/>
            <person name="Ligneul C."/>
            <person name="Rouse J."/>
            <person name="El-Asrag M.E."/>
            <person name="Pantiru A."/>
            <person name="Vancollie V.E."/>
            <person name="Ng H.W.Y."/>
            <person name="Ogbeta J.A."/>
            <person name="Goodchild K."/>
            <person name="Ellegood J."/>
            <person name="Lelliott C.J."/>
            <person name="Mullins J.G.L."/>
            <person name="Bretman A."/>
            <person name="Al-Ali R."/>
            <person name="Beetz C."/>
            <person name="Al-Gazali L."/>
            <person name="Al Shamsi A."/>
            <person name="Lerch J.P."/>
            <person name="Mellor J.R."/>
            <person name="Al Sayegh A."/>
            <person name="Ali M."/>
            <person name="Inglehearn C.F."/>
            <person name="Clapcote S.J."/>
        </authorList>
    </citation>
    <scope>DISRUPTION PHENOTYPE</scope>
</reference>
<comment type="function">
    <text evidence="8">Molecular tethering protein that connects endoplasmic reticulum and mitochondria membranes (PubMed:29097544). PDZD8-dependent endoplasmic reticulum-mitochondria membrane tethering is essential for endoplasmic reticulum-mitochondria Ca(2+) transfer (PubMed:29097544). In neurons, involved in the regulation of dendritic Ca(2+) dynamics by regulating mitochondrial Ca(2+) uptake in neurons (PubMed:29097544).</text>
</comment>
<comment type="subunit">
    <text evidence="2">Interacts with MSN.</text>
</comment>
<comment type="subcellular location">
    <subcellularLocation>
        <location evidence="8">Endoplasmic reticulum membrane</location>
        <topology evidence="3">Single-pass membrane protein</topology>
    </subcellularLocation>
    <text evidence="8">Localizes at mitochondria-endoplasmic reticulum contact sites.</text>
</comment>
<comment type="domain">
    <text evidence="1">The SMP-LTD domain is a barrel-like domain that binds phospholipids.</text>
</comment>
<comment type="disruption phenotype">
    <text evidence="9">Null animals show poor overall growth and reduced total brain volume, although the relative volume of certain regions is increased. Mutant mice demonstrate impaired hippocampal-dependent spatial memory, increased spontaneous repetitive stereotypic motor movements and decreased anxiety-like behavior compared to controls.</text>
</comment>
<organism>
    <name type="scientific">Mus musculus</name>
    <name type="common">Mouse</name>
    <dbReference type="NCBI Taxonomy" id="10090"/>
    <lineage>
        <taxon>Eukaryota</taxon>
        <taxon>Metazoa</taxon>
        <taxon>Chordata</taxon>
        <taxon>Craniata</taxon>
        <taxon>Vertebrata</taxon>
        <taxon>Euteleostomi</taxon>
        <taxon>Mammalia</taxon>
        <taxon>Eutheria</taxon>
        <taxon>Euarchontoglires</taxon>
        <taxon>Glires</taxon>
        <taxon>Rodentia</taxon>
        <taxon>Myomorpha</taxon>
        <taxon>Muroidea</taxon>
        <taxon>Muridae</taxon>
        <taxon>Murinae</taxon>
        <taxon>Mus</taxon>
        <taxon>Mus</taxon>
    </lineage>
</organism>
<proteinExistence type="evidence at protein level"/>
<name>PDZD8_MOUSE</name>
<sequence length="1147" mass="127739">MGLLLLILASAVLGSFLTLLAQFLLLYRRQPEPRADEAARAGDGFRYLKPVPGLPLREYLYGGGAEELAACSSEAGASSTPTPDSPAPPTLETCYFLNATILFLFRELRDTALARRWVTKKIKVEFEELLQTKTAGRLLEGLSLRDVFLGDTVPFIKTIRLVRPVVASGTGEPDDPDGDALPATCPEELAFEAEVEYNGGFHLAIDVDLVFGKSAYLFVKLSRVVGRLRFVLTRVPFTHWFFSFVEDPLIDFEVRSQFEGRPMPQLTSIIVNQLKKIIKRKHTLPSYKIRFKPFFPYQALQGFEEDEELIHIQQWALTEGRLKVTLLECSRLFIFGSYDRETNVHCTLELSSGVWEEKQRSSIKTVELIKGNLQSVGLTLRLVQSTDGYAGHVIIETVAPNSPAAMADLQRGDRLIAIGGVKITSTLQVLKLIKQAGDRVLVYYQRPAGQSSQDSLGQLEESFLSSSCQAAYEEDAAGLSADTENRDLDSEFEDLASDVRVQTELKEETQPLSHSPKRTPTTLSIKPLGAISPVLNRKLISGIHPPPQKLPSKEGNKPSTLKTSETTEAAQVSKPQGPTFKPPVPPRPQGRVPLPPTDTSAQADPEAPEKPDKVLLPPPPADKPAEKQVKSVDQGEDVAAGKQSSAKQEGVKDLPSESSAPTKDSSDDPQMWESSEVLYRNKVGKWSRTRASCVFDIEACHRYLNIALWCRDPFKLGGLICLGHVSLKLEEVALGCLATSNMEYLTKFRLEPPTPKAMVTRTALRNLSMQKGFNDKFCFGDITIHFKYLKEGEPDHHIVPNVEKEKELHLVEEVSTLPKEEHFVGQMSLSENKHSFQDTQFQNPTWCDYCKKKVWTKAASQCMFCAYVCHKKCQEKCLAETPLCGATERRIDRTLKNLRLEGQDPLLGLPPRVEIEANKSVNKTTGLTRHIINTSSRLLNLRQVSKTRLSEPGTDLVEPSPKHTPNTSDNEGSDTEVCGSNSPSKRGNSAGIKLMRKEGGLDDSVFIAVKEIGRDLYRGLPTEERIQKLEFMLDKLQNEIDQELEHNNSLVREEKETNDTRKKSVLSAALAKSGERLQALTLLMIHYRAGIEDIETLENLSLDQHSKKMNKYADDTEEDLDSEISQLIDSQPFSNISDDLFGPSESV</sequence>
<gene>
    <name evidence="12" type="primary">Pdzd8</name>
</gene>
<evidence type="ECO:0000250" key="1">
    <source>
        <dbReference type="UniProtKB" id="A0FGR8"/>
    </source>
</evidence>
<evidence type="ECO:0000250" key="2">
    <source>
        <dbReference type="UniProtKB" id="Q8NEN9"/>
    </source>
</evidence>
<evidence type="ECO:0000255" key="3"/>
<evidence type="ECO:0000255" key="4">
    <source>
        <dbReference type="PROSITE-ProRule" id="PRU00143"/>
    </source>
</evidence>
<evidence type="ECO:0000255" key="5">
    <source>
        <dbReference type="PROSITE-ProRule" id="PRU00226"/>
    </source>
</evidence>
<evidence type="ECO:0000255" key="6">
    <source>
        <dbReference type="PROSITE-ProRule" id="PRU01194"/>
    </source>
</evidence>
<evidence type="ECO:0000256" key="7">
    <source>
        <dbReference type="SAM" id="MobiDB-lite"/>
    </source>
</evidence>
<evidence type="ECO:0000269" key="8">
    <source>
    </source>
</evidence>
<evidence type="ECO:0000269" key="9">
    <source>
    </source>
</evidence>
<evidence type="ECO:0000305" key="10"/>
<evidence type="ECO:0000312" key="11">
    <source>
        <dbReference type="EMBL" id="BAE26187.1"/>
    </source>
</evidence>
<evidence type="ECO:0000312" key="12">
    <source>
        <dbReference type="MGI" id="MGI:2677270"/>
    </source>
</evidence>
<evidence type="ECO:0007744" key="13">
    <source>
    </source>
</evidence>
<evidence type="ECO:0007744" key="14">
    <source>
    </source>
</evidence>
<dbReference type="EMBL" id="AK145020">
    <property type="protein sequence ID" value="BAE26187.1"/>
    <property type="molecule type" value="mRNA"/>
</dbReference>
<dbReference type="EMBL" id="AC139040">
    <property type="status" value="NOT_ANNOTATED_CDS"/>
    <property type="molecule type" value="Genomic_DNA"/>
</dbReference>
<dbReference type="EMBL" id="BC141370">
    <property type="protein sequence ID" value="AAI41371.1"/>
    <property type="molecule type" value="mRNA"/>
</dbReference>
<dbReference type="EMBL" id="BC141371">
    <property type="protein sequence ID" value="AAI41372.1"/>
    <property type="molecule type" value="mRNA"/>
</dbReference>
<dbReference type="CCDS" id="CCDS29936.1"/>
<dbReference type="RefSeq" id="NP_001028394.2">
    <property type="nucleotide sequence ID" value="NM_001033222.3"/>
</dbReference>
<dbReference type="SMR" id="B9EJ80"/>
<dbReference type="FunCoup" id="B9EJ80">
    <property type="interactions" value="931"/>
</dbReference>
<dbReference type="IntAct" id="B9EJ80">
    <property type="interactions" value="2"/>
</dbReference>
<dbReference type="MINT" id="B9EJ80"/>
<dbReference type="STRING" id="10090.ENSMUSP00000096880"/>
<dbReference type="GlyGen" id="B9EJ80">
    <property type="glycosylation" value="2 sites, 1 N-linked glycan (1 site)"/>
</dbReference>
<dbReference type="iPTMnet" id="B9EJ80"/>
<dbReference type="PhosphoSitePlus" id="B9EJ80"/>
<dbReference type="SwissPalm" id="B9EJ80"/>
<dbReference type="jPOST" id="B9EJ80"/>
<dbReference type="PaxDb" id="10090-ENSMUSP00000096880"/>
<dbReference type="PeptideAtlas" id="B9EJ80"/>
<dbReference type="ProteomicsDB" id="287907"/>
<dbReference type="Pumba" id="B9EJ80"/>
<dbReference type="Antibodypedia" id="2575">
    <property type="antibodies" value="75 antibodies from 16 providers"/>
</dbReference>
<dbReference type="DNASU" id="107368"/>
<dbReference type="Ensembl" id="ENSMUST00000099274.4">
    <property type="protein sequence ID" value="ENSMUSP00000096880.3"/>
    <property type="gene ID" value="ENSMUSG00000074746.4"/>
</dbReference>
<dbReference type="GeneID" id="107368"/>
<dbReference type="KEGG" id="mmu:107368"/>
<dbReference type="UCSC" id="uc008ibj.2">
    <property type="organism name" value="mouse"/>
</dbReference>
<dbReference type="AGR" id="MGI:2677270"/>
<dbReference type="CTD" id="118987"/>
<dbReference type="MGI" id="MGI:2677270">
    <property type="gene designation" value="Pdzd8"/>
</dbReference>
<dbReference type="VEuPathDB" id="HostDB:ENSMUSG00000074746"/>
<dbReference type="eggNOG" id="KOG3532">
    <property type="taxonomic scope" value="Eukaryota"/>
</dbReference>
<dbReference type="GeneTree" id="ENSGT00390000017746"/>
<dbReference type="HOGENOM" id="CLU_008594_0_0_1"/>
<dbReference type="InParanoid" id="B9EJ80"/>
<dbReference type="OMA" id="HIALECM"/>
<dbReference type="OrthoDB" id="10004596at2759"/>
<dbReference type="PhylomeDB" id="B9EJ80"/>
<dbReference type="TreeFam" id="TF324166"/>
<dbReference type="BioGRID-ORCS" id="107368">
    <property type="hits" value="2 hits in 77 CRISPR screens"/>
</dbReference>
<dbReference type="ChiTaRS" id="Pdzd8">
    <property type="organism name" value="mouse"/>
</dbReference>
<dbReference type="PRO" id="PR:B9EJ80"/>
<dbReference type="Proteomes" id="UP000000589">
    <property type="component" value="Chromosome 19"/>
</dbReference>
<dbReference type="RNAct" id="B9EJ80">
    <property type="molecule type" value="protein"/>
</dbReference>
<dbReference type="Bgee" id="ENSMUSG00000074746">
    <property type="expression patterns" value="Expressed in otolith organ and 226 other cell types or tissues"/>
</dbReference>
<dbReference type="GO" id="GO:0005789">
    <property type="term" value="C:endoplasmic reticulum membrane"/>
    <property type="evidence" value="ECO:0000314"/>
    <property type="project" value="UniProtKB"/>
</dbReference>
<dbReference type="GO" id="GO:0044233">
    <property type="term" value="C:mitochondria-associated endoplasmic reticulum membrane contact site"/>
    <property type="evidence" value="ECO:0000314"/>
    <property type="project" value="UniProtKB"/>
</dbReference>
<dbReference type="GO" id="GO:0005739">
    <property type="term" value="C:mitochondrion"/>
    <property type="evidence" value="ECO:0007669"/>
    <property type="project" value="GOC"/>
</dbReference>
<dbReference type="GO" id="GO:0008289">
    <property type="term" value="F:lipid binding"/>
    <property type="evidence" value="ECO:0007669"/>
    <property type="project" value="UniProtKB-KW"/>
</dbReference>
<dbReference type="GO" id="GO:0008270">
    <property type="term" value="F:zinc ion binding"/>
    <property type="evidence" value="ECO:0007669"/>
    <property type="project" value="UniProtKB-KW"/>
</dbReference>
<dbReference type="GO" id="GO:0007010">
    <property type="term" value="P:cytoskeleton organization"/>
    <property type="evidence" value="ECO:0007669"/>
    <property type="project" value="Ensembl"/>
</dbReference>
<dbReference type="GO" id="GO:0006869">
    <property type="term" value="P:lipid transport"/>
    <property type="evidence" value="ECO:0007669"/>
    <property type="project" value="UniProtKB-KW"/>
</dbReference>
<dbReference type="GO" id="GO:0051560">
    <property type="term" value="P:mitochondrial calcium ion homeostasis"/>
    <property type="evidence" value="ECO:0000314"/>
    <property type="project" value="UniProtKB"/>
</dbReference>
<dbReference type="GO" id="GO:1990456">
    <property type="term" value="P:mitochondrion-endoplasmic reticulum membrane tethering"/>
    <property type="evidence" value="ECO:0000314"/>
    <property type="project" value="UniProtKB"/>
</dbReference>
<dbReference type="GO" id="GO:0022604">
    <property type="term" value="P:regulation of cell morphogenesis"/>
    <property type="evidence" value="ECO:0007669"/>
    <property type="project" value="Ensembl"/>
</dbReference>
<dbReference type="CDD" id="cd20825">
    <property type="entry name" value="C1_PDZD8"/>
    <property type="match status" value="1"/>
</dbReference>
<dbReference type="CDD" id="cd00136">
    <property type="entry name" value="PDZ_canonical"/>
    <property type="match status" value="1"/>
</dbReference>
<dbReference type="CDD" id="cd21674">
    <property type="entry name" value="SMP_PDZD8"/>
    <property type="match status" value="1"/>
</dbReference>
<dbReference type="FunFam" id="3.30.60.20:FF:000055">
    <property type="entry name" value="PDZ domain-containing protein 8"/>
    <property type="match status" value="1"/>
</dbReference>
<dbReference type="Gene3D" id="2.30.42.10">
    <property type="match status" value="1"/>
</dbReference>
<dbReference type="Gene3D" id="3.30.60.20">
    <property type="match status" value="1"/>
</dbReference>
<dbReference type="InterPro" id="IPR046349">
    <property type="entry name" value="C1-like_sf"/>
</dbReference>
<dbReference type="InterPro" id="IPR001478">
    <property type="entry name" value="PDZ"/>
</dbReference>
<dbReference type="InterPro" id="IPR041489">
    <property type="entry name" value="PDZ_6"/>
</dbReference>
<dbReference type="InterPro" id="IPR036034">
    <property type="entry name" value="PDZ_sf"/>
</dbReference>
<dbReference type="InterPro" id="IPR039275">
    <property type="entry name" value="PDZD8"/>
</dbReference>
<dbReference type="InterPro" id="IPR002219">
    <property type="entry name" value="PE/DAG-bd"/>
</dbReference>
<dbReference type="InterPro" id="IPR031468">
    <property type="entry name" value="SMP_LBD"/>
</dbReference>
<dbReference type="PANTHER" id="PTHR21519">
    <property type="entry name" value="PDZ DOMAIN-CONTAINING PROTEIN 8"/>
    <property type="match status" value="1"/>
</dbReference>
<dbReference type="PANTHER" id="PTHR21519:SF1">
    <property type="entry name" value="PDZ DOMAIN-CONTAINING PROTEIN 8"/>
    <property type="match status" value="1"/>
</dbReference>
<dbReference type="Pfam" id="PF00130">
    <property type="entry name" value="C1_1"/>
    <property type="match status" value="1"/>
</dbReference>
<dbReference type="Pfam" id="PF17820">
    <property type="entry name" value="PDZ_6"/>
    <property type="match status" value="1"/>
</dbReference>
<dbReference type="SMART" id="SM00109">
    <property type="entry name" value="C1"/>
    <property type="match status" value="1"/>
</dbReference>
<dbReference type="SMART" id="SM00228">
    <property type="entry name" value="PDZ"/>
    <property type="match status" value="1"/>
</dbReference>
<dbReference type="SUPFAM" id="SSF57889">
    <property type="entry name" value="Cysteine-rich domain"/>
    <property type="match status" value="1"/>
</dbReference>
<dbReference type="SUPFAM" id="SSF50156">
    <property type="entry name" value="PDZ domain-like"/>
    <property type="match status" value="1"/>
</dbReference>
<dbReference type="PROSITE" id="PS50106">
    <property type="entry name" value="PDZ"/>
    <property type="match status" value="1"/>
</dbReference>
<dbReference type="PROSITE" id="PS51847">
    <property type="entry name" value="SMP"/>
    <property type="match status" value="1"/>
</dbReference>
<dbReference type="PROSITE" id="PS50081">
    <property type="entry name" value="ZF_DAG_PE_2"/>
    <property type="match status" value="1"/>
</dbReference>
<protein>
    <recommendedName>
        <fullName evidence="10">PDZ domain-containing protein 8</fullName>
    </recommendedName>
</protein>